<dbReference type="EMBL" id="BT020833">
    <property type="protein sequence ID" value="AAX08850.1"/>
    <property type="molecule type" value="mRNA"/>
</dbReference>
<dbReference type="RefSeq" id="NP_001015559.1">
    <property type="nucleotide sequence ID" value="NM_001015559.1"/>
</dbReference>
<dbReference type="SMR" id="Q5E9T7"/>
<dbReference type="STRING" id="9913.ENSBTAP00000061386"/>
<dbReference type="PaxDb" id="9913-ENSBTAP00000032057"/>
<dbReference type="GeneID" id="509264"/>
<dbReference type="KEGG" id="bta:509264"/>
<dbReference type="CTD" id="79960"/>
<dbReference type="eggNOG" id="KOG0954">
    <property type="taxonomic scope" value="Eukaryota"/>
</dbReference>
<dbReference type="InParanoid" id="Q5E9T7"/>
<dbReference type="OrthoDB" id="20839at2759"/>
<dbReference type="Proteomes" id="UP000009136">
    <property type="component" value="Unplaced"/>
</dbReference>
<dbReference type="GO" id="GO:0042995">
    <property type="term" value="C:cell projection"/>
    <property type="evidence" value="ECO:0007669"/>
    <property type="project" value="UniProtKB-KW"/>
</dbReference>
<dbReference type="GO" id="GO:0005737">
    <property type="term" value="C:cytoplasm"/>
    <property type="evidence" value="ECO:0007669"/>
    <property type="project" value="UniProtKB-SubCell"/>
</dbReference>
<dbReference type="GO" id="GO:0005856">
    <property type="term" value="C:cytoskeleton"/>
    <property type="evidence" value="ECO:0007669"/>
    <property type="project" value="UniProtKB-KW"/>
</dbReference>
<dbReference type="GO" id="GO:0000123">
    <property type="term" value="C:histone acetyltransferase complex"/>
    <property type="evidence" value="ECO:0000250"/>
    <property type="project" value="UniProtKB"/>
</dbReference>
<dbReference type="GO" id="GO:0005634">
    <property type="term" value="C:nucleus"/>
    <property type="evidence" value="ECO:0007669"/>
    <property type="project" value="UniProtKB-SubCell"/>
</dbReference>
<dbReference type="GO" id="GO:0008270">
    <property type="term" value="F:zinc ion binding"/>
    <property type="evidence" value="ECO:0007669"/>
    <property type="project" value="UniProtKB-KW"/>
</dbReference>
<dbReference type="GO" id="GO:0006915">
    <property type="term" value="P:apoptotic process"/>
    <property type="evidence" value="ECO:0007669"/>
    <property type="project" value="UniProtKB-KW"/>
</dbReference>
<dbReference type="GO" id="GO:0006338">
    <property type="term" value="P:chromatin remodeling"/>
    <property type="evidence" value="ECO:0007669"/>
    <property type="project" value="GOC"/>
</dbReference>
<dbReference type="GO" id="GO:0006357">
    <property type="term" value="P:regulation of transcription by RNA polymerase II"/>
    <property type="evidence" value="ECO:0000318"/>
    <property type="project" value="GO_Central"/>
</dbReference>
<dbReference type="CDD" id="cd15704">
    <property type="entry name" value="ePHD_JADE1"/>
    <property type="match status" value="1"/>
</dbReference>
<dbReference type="FunFam" id="3.30.40.10:FF:000004">
    <property type="entry name" value="Jade family PHD finger 2"/>
    <property type="match status" value="1"/>
</dbReference>
<dbReference type="FunFam" id="3.30.40.10:FF:000030">
    <property type="entry name" value="Protein Jade-1 isoform 1"/>
    <property type="match status" value="1"/>
</dbReference>
<dbReference type="Gene3D" id="3.30.40.10">
    <property type="entry name" value="Zinc/RING finger domain, C3HC4 (zinc finger)"/>
    <property type="match status" value="2"/>
</dbReference>
<dbReference type="InterPro" id="IPR019542">
    <property type="entry name" value="Enhancer_polycomb-like_N"/>
</dbReference>
<dbReference type="InterPro" id="IPR034732">
    <property type="entry name" value="EPHD"/>
</dbReference>
<dbReference type="InterPro" id="IPR050701">
    <property type="entry name" value="Histone_Mod_Regulator"/>
</dbReference>
<dbReference type="InterPro" id="IPR019786">
    <property type="entry name" value="Zinc_finger_PHD-type_CS"/>
</dbReference>
<dbReference type="InterPro" id="IPR011011">
    <property type="entry name" value="Znf_FYVE_PHD"/>
</dbReference>
<dbReference type="InterPro" id="IPR001965">
    <property type="entry name" value="Znf_PHD"/>
</dbReference>
<dbReference type="InterPro" id="IPR019787">
    <property type="entry name" value="Znf_PHD-finger"/>
</dbReference>
<dbReference type="InterPro" id="IPR013083">
    <property type="entry name" value="Znf_RING/FYVE/PHD"/>
</dbReference>
<dbReference type="PANTHER" id="PTHR13793">
    <property type="entry name" value="PHD FINGER PROTEINS"/>
    <property type="match status" value="1"/>
</dbReference>
<dbReference type="PANTHER" id="PTHR13793:SF79">
    <property type="entry name" value="PROTEIN JADE-1"/>
    <property type="match status" value="1"/>
</dbReference>
<dbReference type="Pfam" id="PF10513">
    <property type="entry name" value="EPL1"/>
    <property type="match status" value="1"/>
</dbReference>
<dbReference type="Pfam" id="PF13831">
    <property type="entry name" value="PHD_2"/>
    <property type="match status" value="1"/>
</dbReference>
<dbReference type="Pfam" id="PF13832">
    <property type="entry name" value="zf-HC5HC2H_2"/>
    <property type="match status" value="1"/>
</dbReference>
<dbReference type="SMART" id="SM00249">
    <property type="entry name" value="PHD"/>
    <property type="match status" value="2"/>
</dbReference>
<dbReference type="SUPFAM" id="SSF57903">
    <property type="entry name" value="FYVE/PHD zinc finger"/>
    <property type="match status" value="1"/>
</dbReference>
<dbReference type="PROSITE" id="PS51805">
    <property type="entry name" value="EPHD"/>
    <property type="match status" value="1"/>
</dbReference>
<dbReference type="PROSITE" id="PS01359">
    <property type="entry name" value="ZF_PHD_1"/>
    <property type="match status" value="1"/>
</dbReference>
<dbReference type="PROSITE" id="PS50016">
    <property type="entry name" value="ZF_PHD_2"/>
    <property type="match status" value="1"/>
</dbReference>
<accession>Q5E9T7</accession>
<protein>
    <recommendedName>
        <fullName>Protein Jade-1</fullName>
    </recommendedName>
    <alternativeName>
        <fullName>Jade family PHD finger protein 1</fullName>
    </alternativeName>
    <alternativeName>
        <fullName>PHD finger protein 17</fullName>
    </alternativeName>
</protein>
<feature type="chain" id="PRO_0000253528" description="Protein Jade-1">
    <location>
        <begin position="1"/>
        <end position="509"/>
    </location>
</feature>
<feature type="zinc finger region" description="PHD-type 1" evidence="3">
    <location>
        <begin position="203"/>
        <end position="253"/>
    </location>
</feature>
<feature type="zinc finger region" description="C2HC pre-PHD-type" evidence="4">
    <location>
        <begin position="255"/>
        <end position="289"/>
    </location>
</feature>
<feature type="zinc finger region" description="PHD-type 2" evidence="4">
    <location>
        <begin position="313"/>
        <end position="369"/>
    </location>
</feature>
<feature type="region of interest" description="Disordered" evidence="5">
    <location>
        <begin position="1"/>
        <end position="45"/>
    </location>
</feature>
<feature type="region of interest" description="Interaction with KAT7/HBO1 and histones" evidence="2">
    <location>
        <begin position="60"/>
        <end position="80"/>
    </location>
</feature>
<feature type="region of interest" description="Interaction with histones" evidence="2">
    <location>
        <begin position="80"/>
        <end position="188"/>
    </location>
</feature>
<feature type="region of interest" description="Disordered" evidence="5">
    <location>
        <begin position="373"/>
        <end position="399"/>
    </location>
</feature>
<feature type="modified residue" description="Phosphoserine" evidence="2">
    <location>
        <position position="89"/>
    </location>
</feature>
<feature type="modified residue" description="Phosphothreonine" evidence="2">
    <location>
        <position position="92"/>
    </location>
</feature>
<feature type="cross-link" description="Glycyl lysine isopeptide (Lys-Gly) (interchain with G-Cter in SUMO2)" evidence="2">
    <location>
        <position position="114"/>
    </location>
</feature>
<evidence type="ECO:0000250" key="1"/>
<evidence type="ECO:0000250" key="2">
    <source>
        <dbReference type="UniProtKB" id="Q6IE81"/>
    </source>
</evidence>
<evidence type="ECO:0000255" key="3">
    <source>
        <dbReference type="PROSITE-ProRule" id="PRU00146"/>
    </source>
</evidence>
<evidence type="ECO:0000255" key="4">
    <source>
        <dbReference type="PROSITE-ProRule" id="PRU01146"/>
    </source>
</evidence>
<evidence type="ECO:0000256" key="5">
    <source>
        <dbReference type="SAM" id="MobiDB-lite"/>
    </source>
</evidence>
<evidence type="ECO:0000305" key="6"/>
<keyword id="KW-0010">Activator</keyword>
<keyword id="KW-0053">Apoptosis</keyword>
<keyword id="KW-0966">Cell projection</keyword>
<keyword id="KW-0158">Chromosome</keyword>
<keyword id="KW-0963">Cytoplasm</keyword>
<keyword id="KW-0206">Cytoskeleton</keyword>
<keyword id="KW-1017">Isopeptide bond</keyword>
<keyword id="KW-0479">Metal-binding</keyword>
<keyword id="KW-0539">Nucleus</keyword>
<keyword id="KW-0597">Phosphoprotein</keyword>
<keyword id="KW-1185">Reference proteome</keyword>
<keyword id="KW-0677">Repeat</keyword>
<keyword id="KW-0804">Transcription</keyword>
<keyword id="KW-0805">Transcription regulation</keyword>
<keyword id="KW-0832">Ubl conjugation</keyword>
<keyword id="KW-0862">Zinc</keyword>
<keyword id="KW-0863">Zinc-finger</keyword>
<name>JADE1_BOVIN</name>
<reference key="1">
    <citation type="journal article" date="2005" name="BMC Genomics">
        <title>Characterization of 954 bovine full-CDS cDNA sequences.</title>
        <authorList>
            <person name="Harhay G.P."/>
            <person name="Sonstegard T.S."/>
            <person name="Keele J.W."/>
            <person name="Heaton M.P."/>
            <person name="Clawson M.L."/>
            <person name="Snelling W.M."/>
            <person name="Wiedmann R.T."/>
            <person name="Van Tassell C.P."/>
            <person name="Smith T.P.L."/>
        </authorList>
    </citation>
    <scope>NUCLEOTIDE SEQUENCE [LARGE SCALE MRNA]</scope>
</reference>
<organism>
    <name type="scientific">Bos taurus</name>
    <name type="common">Bovine</name>
    <dbReference type="NCBI Taxonomy" id="9913"/>
    <lineage>
        <taxon>Eukaryota</taxon>
        <taxon>Metazoa</taxon>
        <taxon>Chordata</taxon>
        <taxon>Craniata</taxon>
        <taxon>Vertebrata</taxon>
        <taxon>Euteleostomi</taxon>
        <taxon>Mammalia</taxon>
        <taxon>Eutheria</taxon>
        <taxon>Laurasiatheria</taxon>
        <taxon>Artiodactyla</taxon>
        <taxon>Ruminantia</taxon>
        <taxon>Pecora</taxon>
        <taxon>Bovidae</taxon>
        <taxon>Bovinae</taxon>
        <taxon>Bos</taxon>
    </lineage>
</organism>
<sequence length="509" mass="58312">MKRGRLPSSSEDSDDNGSLSTTWSQNSRSQHRRSSCSRPEDRKPSEVFRTDLITAMKLHDSYQLNPDEYYVLADPWRQEWEKGVQVPVSPGTIPQPVARVVSEEKSLMFIRPKKYIVSSGSEPPELGYVDIRTLADSVCRYDLNDMDAAWLELTNEEFKEMGMPELDEYTMERVLEEFEQRCYDNMNHAIETEEGLGIEYDEYVVCDVCQSPDGEDGNEMVFCDKCNICVHQACYGILKVPEGSWLCRTCALGVQPKCLLCPKKGGAMKPTRSGTKWVHVSCALWIPEVSIGSPEKMEPITKVSHIPSSRWALVCSLCNEKFGASIQCSVKNCRTAFHVTCAFDRGLEMKTILAENDEVKFKSYCPKHSSHRKAEEGLGEGTAQENGAPECSPRDPLEPFAGLEQNREEAHRVSVRKQKLQQLEDEFYTFVNLLDVARALRLPEEVVDFLYQYWKLKRKVNFNKPLITPKKDEEDNLAKREQDVLFRRLQLFTHLRQDLERVMTDTDTL</sequence>
<gene>
    <name type="primary">JADE1</name>
    <name type="synonym">PHF17</name>
</gene>
<comment type="function">
    <text evidence="2">Scaffold subunit of some HBO1 complexes, which have a histone H4 acetyltransferase activity. Plays a key role in HBO1 complex by directing KAT7/HBO1 specificity towards histone H4 acetylation (H4K5ac, H4K8ac and H4K12ac), regulating DNA replication initiation, regulating DNA replication initiation. May also promote acetylation of nucleosomal histone H4 by KAT5. Promotes apoptosis. May act as a renal tumor suppressor. Negatively regulates canonical Wnt signaling; at least in part, cooperates with NPHP4 in this function.</text>
</comment>
<comment type="subunit">
    <text evidence="2">Component of the HBO1 complex composed at least of ING4 or ING5, KAT7/HBO1, MEAF6, and one of JADE1, JADE2 and JADE3. Interacts with NPHP4.</text>
</comment>
<comment type="subcellular location">
    <subcellularLocation>
        <location evidence="2">Nucleus</location>
    </subcellularLocation>
    <subcellularLocation>
        <location evidence="2">Chromosome</location>
    </subcellularLocation>
    <subcellularLocation>
        <location evidence="2">Cytoplasm</location>
    </subcellularLocation>
    <subcellularLocation>
        <location evidence="2">Cytoplasm</location>
        <location evidence="2">Cytoskeleton</location>
        <location evidence="2">Cilium basal body</location>
    </subcellularLocation>
    <text evidence="2">Localizes to the ciliary transition zone.</text>
</comment>
<comment type="domain">
    <text evidence="1">The 2 PHD-type zinc fingers are required for transcriptional activity.</text>
</comment>
<comment type="similarity">
    <text evidence="6">Belongs to the JADE family.</text>
</comment>
<proteinExistence type="evidence at transcript level"/>